<evidence type="ECO:0000255" key="1">
    <source>
        <dbReference type="HAMAP-Rule" id="MF_00248"/>
    </source>
</evidence>
<organism>
    <name type="scientific">Bacillus cereus (strain B4264)</name>
    <dbReference type="NCBI Taxonomy" id="405532"/>
    <lineage>
        <taxon>Bacteria</taxon>
        <taxon>Bacillati</taxon>
        <taxon>Bacillota</taxon>
        <taxon>Bacilli</taxon>
        <taxon>Bacillales</taxon>
        <taxon>Bacillaceae</taxon>
        <taxon>Bacillus</taxon>
        <taxon>Bacillus cereus group</taxon>
    </lineage>
</organism>
<feature type="chain" id="PRO_1000192672" description="ATP-dependent protease subunit HslV">
    <location>
        <begin position="1"/>
        <end position="180"/>
    </location>
</feature>
<feature type="active site" evidence="1">
    <location>
        <position position="7"/>
    </location>
</feature>
<feature type="binding site" evidence="1">
    <location>
        <position position="165"/>
    </location>
    <ligand>
        <name>Na(+)</name>
        <dbReference type="ChEBI" id="CHEBI:29101"/>
    </ligand>
</feature>
<feature type="binding site" evidence="1">
    <location>
        <position position="168"/>
    </location>
    <ligand>
        <name>Na(+)</name>
        <dbReference type="ChEBI" id="CHEBI:29101"/>
    </ligand>
</feature>
<feature type="binding site" evidence="1">
    <location>
        <position position="171"/>
    </location>
    <ligand>
        <name>Na(+)</name>
        <dbReference type="ChEBI" id="CHEBI:29101"/>
    </ligand>
</feature>
<comment type="function">
    <text evidence="1">Protease subunit of a proteasome-like degradation complex believed to be a general protein degrading machinery.</text>
</comment>
<comment type="catalytic activity">
    <reaction evidence="1">
        <text>ATP-dependent cleavage of peptide bonds with broad specificity.</text>
        <dbReference type="EC" id="3.4.25.2"/>
    </reaction>
</comment>
<comment type="activity regulation">
    <text evidence="1">Allosterically activated by HslU binding.</text>
</comment>
<comment type="subunit">
    <text evidence="1">A double ring-shaped homohexamer of HslV is capped on each side by a ring-shaped HslU homohexamer. The assembly of the HslU/HslV complex is dependent on binding of ATP.</text>
</comment>
<comment type="subcellular location">
    <subcellularLocation>
        <location evidence="1">Cytoplasm</location>
    </subcellularLocation>
</comment>
<comment type="similarity">
    <text evidence="1">Belongs to the peptidase T1B family. HslV subfamily.</text>
</comment>
<proteinExistence type="inferred from homology"/>
<sequence length="180" mass="19449">MGNFHATTIFAVHHNGECAMAGDGQVTMGNAVVMKHTARKVRKLFQGKVLAGFAGSVADAFTLFEMFEGKLEEYNGNLQRAAVEMAKQWRGDKMLRQLEAMLIVMDKTTMLLVSGTGEVIEPDDGILAIGSGGNYALSAGRALKQYASEHLTAKQIAKASLEIAGDICVYTNHNIIVEEL</sequence>
<reference key="1">
    <citation type="submission" date="2008-10" db="EMBL/GenBank/DDBJ databases">
        <title>Genome sequence of Bacillus cereus B4264.</title>
        <authorList>
            <person name="Dodson R.J."/>
            <person name="Durkin A.S."/>
            <person name="Rosovitz M.J."/>
            <person name="Rasko D.A."/>
            <person name="Hoffmaster A."/>
            <person name="Ravel J."/>
            <person name="Sutton G."/>
        </authorList>
    </citation>
    <scope>NUCLEOTIDE SEQUENCE [LARGE SCALE GENOMIC DNA]</scope>
    <source>
        <strain>B4264</strain>
    </source>
</reference>
<keyword id="KW-0021">Allosteric enzyme</keyword>
<keyword id="KW-0963">Cytoplasm</keyword>
<keyword id="KW-0378">Hydrolase</keyword>
<keyword id="KW-0479">Metal-binding</keyword>
<keyword id="KW-0645">Protease</keyword>
<keyword id="KW-0915">Sodium</keyword>
<keyword id="KW-0888">Threonine protease</keyword>
<gene>
    <name evidence="1" type="primary">hslV</name>
    <name type="ordered locus">BCB4264_A3928</name>
</gene>
<dbReference type="EC" id="3.4.25.2" evidence="1"/>
<dbReference type="EMBL" id="CP001176">
    <property type="protein sequence ID" value="ACK61758.1"/>
    <property type="molecule type" value="Genomic_DNA"/>
</dbReference>
<dbReference type="RefSeq" id="WP_000526272.1">
    <property type="nucleotide sequence ID" value="NZ_VEHB01000002.1"/>
</dbReference>
<dbReference type="SMR" id="B7HDV3"/>
<dbReference type="MEROPS" id="T01.007"/>
<dbReference type="GeneID" id="45023658"/>
<dbReference type="KEGG" id="bcb:BCB4264_A3928"/>
<dbReference type="HOGENOM" id="CLU_093872_1_0_9"/>
<dbReference type="Proteomes" id="UP000007096">
    <property type="component" value="Chromosome"/>
</dbReference>
<dbReference type="GO" id="GO:0009376">
    <property type="term" value="C:HslUV protease complex"/>
    <property type="evidence" value="ECO:0007669"/>
    <property type="project" value="UniProtKB-UniRule"/>
</dbReference>
<dbReference type="GO" id="GO:0005839">
    <property type="term" value="C:proteasome core complex"/>
    <property type="evidence" value="ECO:0007669"/>
    <property type="project" value="InterPro"/>
</dbReference>
<dbReference type="GO" id="GO:0046872">
    <property type="term" value="F:metal ion binding"/>
    <property type="evidence" value="ECO:0007669"/>
    <property type="project" value="UniProtKB-KW"/>
</dbReference>
<dbReference type="GO" id="GO:0004298">
    <property type="term" value="F:threonine-type endopeptidase activity"/>
    <property type="evidence" value="ECO:0007669"/>
    <property type="project" value="UniProtKB-KW"/>
</dbReference>
<dbReference type="GO" id="GO:0051603">
    <property type="term" value="P:proteolysis involved in protein catabolic process"/>
    <property type="evidence" value="ECO:0007669"/>
    <property type="project" value="InterPro"/>
</dbReference>
<dbReference type="CDD" id="cd01913">
    <property type="entry name" value="protease_HslV"/>
    <property type="match status" value="1"/>
</dbReference>
<dbReference type="Gene3D" id="3.60.20.10">
    <property type="entry name" value="Glutamine Phosphoribosylpyrophosphate, subunit 1, domain 1"/>
    <property type="match status" value="1"/>
</dbReference>
<dbReference type="HAMAP" id="MF_00248">
    <property type="entry name" value="HslV"/>
    <property type="match status" value="1"/>
</dbReference>
<dbReference type="InterPro" id="IPR022281">
    <property type="entry name" value="ATP-dep_Prtase_HsIV_su"/>
</dbReference>
<dbReference type="InterPro" id="IPR029055">
    <property type="entry name" value="Ntn_hydrolases_N"/>
</dbReference>
<dbReference type="InterPro" id="IPR001353">
    <property type="entry name" value="Proteasome_sua/b"/>
</dbReference>
<dbReference type="InterPro" id="IPR023333">
    <property type="entry name" value="Proteasome_suB-type"/>
</dbReference>
<dbReference type="NCBIfam" id="TIGR03692">
    <property type="entry name" value="ATP_dep_HslV"/>
    <property type="match status" value="1"/>
</dbReference>
<dbReference type="NCBIfam" id="NF003964">
    <property type="entry name" value="PRK05456.1"/>
    <property type="match status" value="1"/>
</dbReference>
<dbReference type="PANTHER" id="PTHR32194:SF0">
    <property type="entry name" value="ATP-DEPENDENT PROTEASE SUBUNIT HSLV"/>
    <property type="match status" value="1"/>
</dbReference>
<dbReference type="PANTHER" id="PTHR32194">
    <property type="entry name" value="METALLOPROTEASE TLDD"/>
    <property type="match status" value="1"/>
</dbReference>
<dbReference type="Pfam" id="PF00227">
    <property type="entry name" value="Proteasome"/>
    <property type="match status" value="1"/>
</dbReference>
<dbReference type="PIRSF" id="PIRSF039093">
    <property type="entry name" value="HslV"/>
    <property type="match status" value="1"/>
</dbReference>
<dbReference type="SUPFAM" id="SSF56235">
    <property type="entry name" value="N-terminal nucleophile aminohydrolases (Ntn hydrolases)"/>
    <property type="match status" value="1"/>
</dbReference>
<dbReference type="PROSITE" id="PS51476">
    <property type="entry name" value="PROTEASOME_BETA_2"/>
    <property type="match status" value="1"/>
</dbReference>
<accession>B7HDV3</accession>
<protein>
    <recommendedName>
        <fullName evidence="1">ATP-dependent protease subunit HslV</fullName>
        <ecNumber evidence="1">3.4.25.2</ecNumber>
    </recommendedName>
</protein>
<name>HSLV_BACC4</name>